<gene>
    <name evidence="1" type="primary">ctaB</name>
    <name type="ordered locus">Bd0290</name>
</gene>
<proteinExistence type="inferred from homology"/>
<dbReference type="EC" id="2.5.1.141" evidence="1"/>
<dbReference type="EMBL" id="BX842646">
    <property type="protein sequence ID" value="CAE77947.1"/>
    <property type="molecule type" value="Genomic_DNA"/>
</dbReference>
<dbReference type="RefSeq" id="WP_011162888.1">
    <property type="nucleotide sequence ID" value="NC_005363.1"/>
</dbReference>
<dbReference type="SMR" id="Q6MR11"/>
<dbReference type="STRING" id="264462.Bd0290"/>
<dbReference type="GeneID" id="93011423"/>
<dbReference type="KEGG" id="bba:Bd0290"/>
<dbReference type="eggNOG" id="COG0109">
    <property type="taxonomic scope" value="Bacteria"/>
</dbReference>
<dbReference type="HOGENOM" id="CLU_029631_3_1_7"/>
<dbReference type="UniPathway" id="UPA00834">
    <property type="reaction ID" value="UER00712"/>
</dbReference>
<dbReference type="Proteomes" id="UP000008080">
    <property type="component" value="Chromosome"/>
</dbReference>
<dbReference type="GO" id="GO:0005886">
    <property type="term" value="C:plasma membrane"/>
    <property type="evidence" value="ECO:0007669"/>
    <property type="project" value="UniProtKB-SubCell"/>
</dbReference>
<dbReference type="GO" id="GO:0008495">
    <property type="term" value="F:protoheme IX farnesyltransferase activity"/>
    <property type="evidence" value="ECO:0007669"/>
    <property type="project" value="UniProtKB-UniRule"/>
</dbReference>
<dbReference type="GO" id="GO:0048034">
    <property type="term" value="P:heme O biosynthetic process"/>
    <property type="evidence" value="ECO:0007669"/>
    <property type="project" value="UniProtKB-UniRule"/>
</dbReference>
<dbReference type="CDD" id="cd13957">
    <property type="entry name" value="PT_UbiA_Cox10"/>
    <property type="match status" value="1"/>
</dbReference>
<dbReference type="Gene3D" id="1.10.357.140">
    <property type="entry name" value="UbiA prenyltransferase"/>
    <property type="match status" value="1"/>
</dbReference>
<dbReference type="HAMAP" id="MF_00154">
    <property type="entry name" value="CyoE_CtaB"/>
    <property type="match status" value="1"/>
</dbReference>
<dbReference type="InterPro" id="IPR006369">
    <property type="entry name" value="Protohaem_IX_farnesylTrfase"/>
</dbReference>
<dbReference type="InterPro" id="IPR000537">
    <property type="entry name" value="UbiA_prenyltransferase"/>
</dbReference>
<dbReference type="InterPro" id="IPR030470">
    <property type="entry name" value="UbiA_prenylTrfase_CS"/>
</dbReference>
<dbReference type="InterPro" id="IPR044878">
    <property type="entry name" value="UbiA_sf"/>
</dbReference>
<dbReference type="NCBIfam" id="TIGR01473">
    <property type="entry name" value="cyoE_ctaB"/>
    <property type="match status" value="1"/>
</dbReference>
<dbReference type="PANTHER" id="PTHR43448">
    <property type="entry name" value="PROTOHEME IX FARNESYLTRANSFERASE, MITOCHONDRIAL"/>
    <property type="match status" value="1"/>
</dbReference>
<dbReference type="PANTHER" id="PTHR43448:SF2">
    <property type="entry name" value="PROTOHEME IX FARNESYLTRANSFERASE, MITOCHONDRIAL"/>
    <property type="match status" value="1"/>
</dbReference>
<dbReference type="Pfam" id="PF01040">
    <property type="entry name" value="UbiA"/>
    <property type="match status" value="1"/>
</dbReference>
<dbReference type="PROSITE" id="PS00943">
    <property type="entry name" value="UBIA"/>
    <property type="match status" value="1"/>
</dbReference>
<accession>Q6MR11</accession>
<organism>
    <name type="scientific">Bdellovibrio bacteriovorus (strain ATCC 15356 / DSM 50701 / NCIMB 9529 / HD100)</name>
    <dbReference type="NCBI Taxonomy" id="264462"/>
    <lineage>
        <taxon>Bacteria</taxon>
        <taxon>Pseudomonadati</taxon>
        <taxon>Bdellovibrionota</taxon>
        <taxon>Bdellovibrionia</taxon>
        <taxon>Bdellovibrionales</taxon>
        <taxon>Pseudobdellovibrionaceae</taxon>
        <taxon>Bdellovibrio</taxon>
    </lineage>
</organism>
<protein>
    <recommendedName>
        <fullName evidence="1">Protoheme IX farnesyltransferase</fullName>
        <ecNumber evidence="1">2.5.1.141</ecNumber>
    </recommendedName>
    <alternativeName>
        <fullName evidence="1">Heme B farnesyltransferase</fullName>
    </alternativeName>
    <alternativeName>
        <fullName evidence="1">Heme O synthase</fullName>
    </alternativeName>
</protein>
<comment type="function">
    <text evidence="1">Converts heme B (protoheme IX) to heme O by substitution of the vinyl group on carbon 2 of heme B porphyrin ring with a hydroxyethyl farnesyl side group.</text>
</comment>
<comment type="catalytic activity">
    <reaction evidence="1">
        <text>heme b + (2E,6E)-farnesyl diphosphate + H2O = Fe(II)-heme o + diphosphate</text>
        <dbReference type="Rhea" id="RHEA:28070"/>
        <dbReference type="ChEBI" id="CHEBI:15377"/>
        <dbReference type="ChEBI" id="CHEBI:33019"/>
        <dbReference type="ChEBI" id="CHEBI:60344"/>
        <dbReference type="ChEBI" id="CHEBI:60530"/>
        <dbReference type="ChEBI" id="CHEBI:175763"/>
        <dbReference type="EC" id="2.5.1.141"/>
    </reaction>
</comment>
<comment type="pathway">
    <text evidence="1">Porphyrin-containing compound metabolism; heme O biosynthesis; heme O from protoheme: step 1/1.</text>
</comment>
<comment type="subcellular location">
    <subcellularLocation>
        <location evidence="1">Cell inner membrane</location>
        <topology evidence="1">Multi-pass membrane protein</topology>
    </subcellularLocation>
</comment>
<comment type="miscellaneous">
    <text evidence="1">Carbon 2 of the heme B porphyrin ring is defined according to the Fischer nomenclature.</text>
</comment>
<comment type="similarity">
    <text evidence="1">Belongs to the UbiA prenyltransferase family. Protoheme IX farnesyltransferase subfamily.</text>
</comment>
<sequence>MLRIYADLTKFGIVVFSVLAGLAGYATGFQIENPFDWKIFLETLLGIYFLSSGSLALNQVQDWKIDQKMPRTAKRPIPSGKIKPAAAGILSVGLLLVGMNMLFKLEPVAGWVGLFCVFLYNGPYTLWWKRRWVFAAVPGAIPGALPVTIGYAVANPDIFNSESLYLFLIMFLWQMPHFWVLAIRYKDDYAAGGIPTLPVALGMEKTMFQVGLYTLVYVGVALAAPMFVHASWMFVLLTFPFVFKVLQEFYRYYKSNGTERWLAFFMWLNVSMLVFIIIPVIDKWNFLFIHHN</sequence>
<feature type="chain" id="PRO_0000346028" description="Protoheme IX farnesyltransferase">
    <location>
        <begin position="1"/>
        <end position="292"/>
    </location>
</feature>
<feature type="transmembrane region" description="Helical" evidence="1">
    <location>
        <begin position="11"/>
        <end position="31"/>
    </location>
</feature>
<feature type="transmembrane region" description="Helical" evidence="1">
    <location>
        <begin position="37"/>
        <end position="57"/>
    </location>
</feature>
<feature type="transmembrane region" description="Helical" evidence="1">
    <location>
        <begin position="85"/>
        <end position="105"/>
    </location>
</feature>
<feature type="transmembrane region" description="Helical" evidence="1">
    <location>
        <begin position="108"/>
        <end position="128"/>
    </location>
</feature>
<feature type="transmembrane region" description="Helical" evidence="1">
    <location>
        <begin position="133"/>
        <end position="153"/>
    </location>
</feature>
<feature type="transmembrane region" description="Helical" evidence="1">
    <location>
        <begin position="163"/>
        <end position="183"/>
    </location>
</feature>
<feature type="transmembrane region" description="Helical" evidence="1">
    <location>
        <begin position="199"/>
        <end position="219"/>
    </location>
</feature>
<feature type="transmembrane region" description="Helical" evidence="1">
    <location>
        <begin position="223"/>
        <end position="243"/>
    </location>
</feature>
<feature type="transmembrane region" description="Helical" evidence="1">
    <location>
        <begin position="261"/>
        <end position="281"/>
    </location>
</feature>
<evidence type="ECO:0000255" key="1">
    <source>
        <dbReference type="HAMAP-Rule" id="MF_00154"/>
    </source>
</evidence>
<keyword id="KW-0997">Cell inner membrane</keyword>
<keyword id="KW-1003">Cell membrane</keyword>
<keyword id="KW-0350">Heme biosynthesis</keyword>
<keyword id="KW-0472">Membrane</keyword>
<keyword id="KW-1185">Reference proteome</keyword>
<keyword id="KW-0808">Transferase</keyword>
<keyword id="KW-0812">Transmembrane</keyword>
<keyword id="KW-1133">Transmembrane helix</keyword>
<reference key="1">
    <citation type="journal article" date="2004" name="Science">
        <title>A predator unmasked: life cycle of Bdellovibrio bacteriovorus from a genomic perspective.</title>
        <authorList>
            <person name="Rendulic S."/>
            <person name="Jagtap P."/>
            <person name="Rosinus A."/>
            <person name="Eppinger M."/>
            <person name="Baar C."/>
            <person name="Lanz C."/>
            <person name="Keller H."/>
            <person name="Lambert C."/>
            <person name="Evans K.J."/>
            <person name="Goesmann A."/>
            <person name="Meyer F."/>
            <person name="Sockett R.E."/>
            <person name="Schuster S.C."/>
        </authorList>
    </citation>
    <scope>NUCLEOTIDE SEQUENCE [LARGE SCALE GENOMIC DNA]</scope>
    <source>
        <strain>ATCC 15356 / DSM 50701 / NCIMB 9529 / HD100</strain>
    </source>
</reference>
<name>COXX_BDEBA</name>